<proteinExistence type="evidence at protein level"/>
<reference key="1">
    <citation type="journal article" date="2001" name="DNA Res.">
        <title>Prediction of the coding sequences of unidentified human genes. XX. The complete sequences of 100 new cDNA clones from brain which code for large proteins in vitro.</title>
        <authorList>
            <person name="Nagase T."/>
            <person name="Nakayama M."/>
            <person name="Nakajima D."/>
            <person name="Kikuno R."/>
            <person name="Ohara O."/>
        </authorList>
    </citation>
    <scope>NUCLEOTIDE SEQUENCE [LARGE SCALE MRNA]</scope>
    <source>
        <tissue>Brain</tissue>
    </source>
</reference>
<reference key="2">
    <citation type="submission" date="2005-09" db="EMBL/GenBank/DDBJ databases">
        <authorList>
            <person name="Mural R.J."/>
            <person name="Istrail S."/>
            <person name="Sutton G.G."/>
            <person name="Florea L."/>
            <person name="Halpern A.L."/>
            <person name="Mobarry C.M."/>
            <person name="Lippert R."/>
            <person name="Walenz B."/>
            <person name="Shatkay H."/>
            <person name="Dew I."/>
            <person name="Miller J.R."/>
            <person name="Flanigan M.J."/>
            <person name="Edwards N.J."/>
            <person name="Bolanos R."/>
            <person name="Fasulo D."/>
            <person name="Halldorsson B.V."/>
            <person name="Hannenhalli S."/>
            <person name="Turner R."/>
            <person name="Yooseph S."/>
            <person name="Lu F."/>
            <person name="Nusskern D.R."/>
            <person name="Shue B.C."/>
            <person name="Zheng X.H."/>
            <person name="Zhong F."/>
            <person name="Delcher A.L."/>
            <person name="Huson D.H."/>
            <person name="Kravitz S.A."/>
            <person name="Mouchard L."/>
            <person name="Reinert K."/>
            <person name="Remington K.A."/>
            <person name="Clark A.G."/>
            <person name="Waterman M.S."/>
            <person name="Eichler E.E."/>
            <person name="Adams M.D."/>
            <person name="Hunkapiller M.W."/>
            <person name="Myers E.W."/>
            <person name="Venter J.C."/>
        </authorList>
    </citation>
    <scope>NUCLEOTIDE SEQUENCE [LARGE SCALE GENOMIC DNA]</scope>
</reference>
<reference key="3">
    <citation type="journal article" date="2004" name="Genome Res.">
        <title>The status, quality, and expansion of the NIH full-length cDNA project: the Mammalian Gene Collection (MGC).</title>
        <authorList>
            <consortium name="The MGC Project Team"/>
        </authorList>
    </citation>
    <scope>NUCLEOTIDE SEQUENCE [LARGE SCALE MRNA]</scope>
    <source>
        <tissue>Brain</tissue>
    </source>
</reference>
<reference key="4">
    <citation type="journal article" date="2007" name="BMC Genomics">
        <title>The full-ORF clone resource of the German cDNA consortium.</title>
        <authorList>
            <person name="Bechtel S."/>
            <person name="Rosenfelder H."/>
            <person name="Duda A."/>
            <person name="Schmidt C.P."/>
            <person name="Ernst U."/>
            <person name="Wellenreuther R."/>
            <person name="Mehrle A."/>
            <person name="Schuster C."/>
            <person name="Bahr A."/>
            <person name="Bloecker H."/>
            <person name="Heubner D."/>
            <person name="Hoerlein A."/>
            <person name="Michel G."/>
            <person name="Wedler H."/>
            <person name="Koehrer K."/>
            <person name="Ottenwaelder B."/>
            <person name="Poustka A."/>
            <person name="Wiemann S."/>
            <person name="Schupp I."/>
        </authorList>
    </citation>
    <scope>NUCLEOTIDE SEQUENCE [LARGE SCALE MRNA] OF 334-628</scope>
    <source>
        <tissue>Brain</tissue>
    </source>
</reference>
<reference key="5">
    <citation type="journal article" date="2004" name="Nat. Genet.">
        <title>Complete sequencing and characterization of 21,243 full-length human cDNAs.</title>
        <authorList>
            <person name="Ota T."/>
            <person name="Suzuki Y."/>
            <person name="Nishikawa T."/>
            <person name="Otsuki T."/>
            <person name="Sugiyama T."/>
            <person name="Irie R."/>
            <person name="Wakamatsu A."/>
            <person name="Hayashi K."/>
            <person name="Sato H."/>
            <person name="Nagai K."/>
            <person name="Kimura K."/>
            <person name="Makita H."/>
            <person name="Sekine M."/>
            <person name="Obayashi M."/>
            <person name="Nishi T."/>
            <person name="Shibahara T."/>
            <person name="Tanaka T."/>
            <person name="Ishii S."/>
            <person name="Yamamoto J."/>
            <person name="Saito K."/>
            <person name="Kawai Y."/>
            <person name="Isono Y."/>
            <person name="Nakamura Y."/>
            <person name="Nagahari K."/>
            <person name="Murakami K."/>
            <person name="Yasuda T."/>
            <person name="Iwayanagi T."/>
            <person name="Wagatsuma M."/>
            <person name="Shiratori A."/>
            <person name="Sudo H."/>
            <person name="Hosoiri T."/>
            <person name="Kaku Y."/>
            <person name="Kodaira H."/>
            <person name="Kondo H."/>
            <person name="Sugawara M."/>
            <person name="Takahashi M."/>
            <person name="Kanda K."/>
            <person name="Yokoi T."/>
            <person name="Furuya T."/>
            <person name="Kikkawa E."/>
            <person name="Omura Y."/>
            <person name="Abe K."/>
            <person name="Kamihara K."/>
            <person name="Katsuta N."/>
            <person name="Sato K."/>
            <person name="Tanikawa M."/>
            <person name="Yamazaki M."/>
            <person name="Ninomiya K."/>
            <person name="Ishibashi T."/>
            <person name="Yamashita H."/>
            <person name="Murakawa K."/>
            <person name="Fujimori K."/>
            <person name="Tanai H."/>
            <person name="Kimata M."/>
            <person name="Watanabe M."/>
            <person name="Hiraoka S."/>
            <person name="Chiba Y."/>
            <person name="Ishida S."/>
            <person name="Ono Y."/>
            <person name="Takiguchi S."/>
            <person name="Watanabe S."/>
            <person name="Yosida M."/>
            <person name="Hotuta T."/>
            <person name="Kusano J."/>
            <person name="Kanehori K."/>
            <person name="Takahashi-Fujii A."/>
            <person name="Hara H."/>
            <person name="Tanase T.-O."/>
            <person name="Nomura Y."/>
            <person name="Togiya S."/>
            <person name="Komai F."/>
            <person name="Hara R."/>
            <person name="Takeuchi K."/>
            <person name="Arita M."/>
            <person name="Imose N."/>
            <person name="Musashino K."/>
            <person name="Yuuki H."/>
            <person name="Oshima A."/>
            <person name="Sasaki N."/>
            <person name="Aotsuka S."/>
            <person name="Yoshikawa Y."/>
            <person name="Matsunawa H."/>
            <person name="Ichihara T."/>
            <person name="Shiohata N."/>
            <person name="Sano S."/>
            <person name="Moriya S."/>
            <person name="Momiyama H."/>
            <person name="Satoh N."/>
            <person name="Takami S."/>
            <person name="Terashima Y."/>
            <person name="Suzuki O."/>
            <person name="Nakagawa S."/>
            <person name="Senoh A."/>
            <person name="Mizoguchi H."/>
            <person name="Goto Y."/>
            <person name="Shimizu F."/>
            <person name="Wakebe H."/>
            <person name="Hishigaki H."/>
            <person name="Watanabe T."/>
            <person name="Sugiyama A."/>
            <person name="Takemoto M."/>
            <person name="Kawakami B."/>
            <person name="Yamazaki M."/>
            <person name="Watanabe K."/>
            <person name="Kumagai A."/>
            <person name="Itakura S."/>
            <person name="Fukuzumi Y."/>
            <person name="Fujimori Y."/>
            <person name="Komiyama M."/>
            <person name="Tashiro H."/>
            <person name="Tanigami A."/>
            <person name="Fujiwara T."/>
            <person name="Ono T."/>
            <person name="Yamada K."/>
            <person name="Fujii Y."/>
            <person name="Ozaki K."/>
            <person name="Hirao M."/>
            <person name="Ohmori Y."/>
            <person name="Kawabata A."/>
            <person name="Hikiji T."/>
            <person name="Kobatake N."/>
            <person name="Inagaki H."/>
            <person name="Ikema Y."/>
            <person name="Okamoto S."/>
            <person name="Okitani R."/>
            <person name="Kawakami T."/>
            <person name="Noguchi S."/>
            <person name="Itoh T."/>
            <person name="Shigeta K."/>
            <person name="Senba T."/>
            <person name="Matsumura K."/>
            <person name="Nakajima Y."/>
            <person name="Mizuno T."/>
            <person name="Morinaga M."/>
            <person name="Sasaki M."/>
            <person name="Togashi T."/>
            <person name="Oyama M."/>
            <person name="Hata H."/>
            <person name="Watanabe M."/>
            <person name="Komatsu T."/>
            <person name="Mizushima-Sugano J."/>
            <person name="Satoh T."/>
            <person name="Shirai Y."/>
            <person name="Takahashi Y."/>
            <person name="Nakagawa K."/>
            <person name="Okumura K."/>
            <person name="Nagase T."/>
            <person name="Nomura N."/>
            <person name="Kikuchi H."/>
            <person name="Masuho Y."/>
            <person name="Yamashita R."/>
            <person name="Nakai K."/>
            <person name="Yada T."/>
            <person name="Nakamura Y."/>
            <person name="Ohara O."/>
            <person name="Isogai T."/>
            <person name="Sugano S."/>
        </authorList>
    </citation>
    <scope>NUCLEOTIDE SEQUENCE [LARGE SCALE MRNA] OF 396-628</scope>
    <source>
        <tissue>Brain</tissue>
    </source>
</reference>
<gene>
    <name type="primary">JPH4</name>
    <name type="synonym">JPHL1</name>
    <name type="synonym">KIAA1831</name>
</gene>
<accession>Q96JJ6</accession>
<accession>D3DS53</accession>
<accession>Q8ND44</accession>
<accession>Q96DQ0</accession>
<organism>
    <name type="scientific">Homo sapiens</name>
    <name type="common">Human</name>
    <dbReference type="NCBI Taxonomy" id="9606"/>
    <lineage>
        <taxon>Eukaryota</taxon>
        <taxon>Metazoa</taxon>
        <taxon>Chordata</taxon>
        <taxon>Craniata</taxon>
        <taxon>Vertebrata</taxon>
        <taxon>Euteleostomi</taxon>
        <taxon>Mammalia</taxon>
        <taxon>Eutheria</taxon>
        <taxon>Euarchontoglires</taxon>
        <taxon>Primates</taxon>
        <taxon>Haplorrhini</taxon>
        <taxon>Catarrhini</taxon>
        <taxon>Hominidae</taxon>
        <taxon>Homo</taxon>
    </lineage>
</organism>
<comment type="function">
    <text evidence="1">Junctophilins contribute to the formation of junctional membrane complexes (JMCs) which link the plasma membrane with the endoplasmic or sarcoplasmic reticulum in excitable cells. Provides a structural foundation for functional cross-talk between the cell surface and intracellular calcium release channels. JPH4 is brain-specific and appears to have an active role in certain neurons involved in motor coordination and memory (By similarity).</text>
</comment>
<comment type="interaction">
    <interactant intactId="EBI-2847044">
        <id>Q96JJ6</id>
    </interactant>
    <interactant intactId="EBI-741480">
        <id>Q9UMX0</id>
        <label>UBQLN1</label>
    </interactant>
    <organismsDiffer>false</organismsDiffer>
    <experiments>3</experiments>
</comment>
<comment type="interaction">
    <interactant intactId="EBI-2847044">
        <id>Q96JJ6</id>
    </interactant>
    <interactant intactId="EBI-947187">
        <id>Q9UHD9</id>
        <label>UBQLN2</label>
    </interactant>
    <organismsDiffer>false</organismsDiffer>
    <experiments>3</experiments>
</comment>
<comment type="subcellular location">
    <subcellularLocation>
        <location evidence="1">Cell membrane</location>
        <topology evidence="1">Peripheral membrane protein</topology>
    </subcellularLocation>
    <subcellularLocation>
        <location evidence="1">Endoplasmic reticulum membrane</location>
        <topology evidence="1">Single-pass type IV membrane protein</topology>
    </subcellularLocation>
    <text evidence="1">Localized predominantly on the plasma membrane. The transmembrane domain is anchored in endoplasmic reticulum membrane, while the N-terminal part associates with the plasma membrane (By similarity).</text>
</comment>
<comment type="domain">
    <text evidence="1">The MORN (membrane occupation and recognition nexus) repeats contribute to the plasma membrane binding, possibly by interacting with phospholipids.</text>
</comment>
<comment type="similarity">
    <text evidence="4">Belongs to the junctophilin family.</text>
</comment>
<comment type="sequence caution" evidence="4">
    <conflict type="erroneous initiation">
        <sequence resource="EMBL-CDS" id="BAB47460"/>
    </conflict>
    <text>Extended N-terminus.</text>
</comment>
<comment type="sequence caution" evidence="4">
    <conflict type="erroneous initiation">
        <sequence resource="EMBL-CDS" id="BAB70905"/>
    </conflict>
    <text>Truncated N-terminus.</text>
</comment>
<keyword id="KW-1003">Cell membrane</keyword>
<keyword id="KW-0256">Endoplasmic reticulum</keyword>
<keyword id="KW-0472">Membrane</keyword>
<keyword id="KW-1267">Proteomics identification</keyword>
<keyword id="KW-1185">Reference proteome</keyword>
<keyword id="KW-0677">Repeat</keyword>
<keyword id="KW-0812">Transmembrane</keyword>
<keyword id="KW-1133">Transmembrane helix</keyword>
<dbReference type="EMBL" id="AB058734">
    <property type="protein sequence ID" value="BAB47460.1"/>
    <property type="status" value="ALT_INIT"/>
    <property type="molecule type" value="mRNA"/>
</dbReference>
<dbReference type="EMBL" id="CH471078">
    <property type="protein sequence ID" value="EAW66135.1"/>
    <property type="molecule type" value="Genomic_DNA"/>
</dbReference>
<dbReference type="EMBL" id="CH471078">
    <property type="protein sequence ID" value="EAW66139.1"/>
    <property type="molecule type" value="Genomic_DNA"/>
</dbReference>
<dbReference type="EMBL" id="BC055429">
    <property type="protein sequence ID" value="AAH55429.1"/>
    <property type="molecule type" value="mRNA"/>
</dbReference>
<dbReference type="EMBL" id="AL834411">
    <property type="protein sequence ID" value="CAD39073.1"/>
    <property type="molecule type" value="mRNA"/>
</dbReference>
<dbReference type="EMBL" id="AK055345">
    <property type="protein sequence ID" value="BAB70905.1"/>
    <property type="status" value="ALT_INIT"/>
    <property type="molecule type" value="mRNA"/>
</dbReference>
<dbReference type="CCDS" id="CCDS9603.1"/>
<dbReference type="RefSeq" id="NP_001139500.1">
    <property type="nucleotide sequence ID" value="NM_001146028.2"/>
</dbReference>
<dbReference type="RefSeq" id="NP_115828.2">
    <property type="nucleotide sequence ID" value="NM_032452.3"/>
</dbReference>
<dbReference type="SMR" id="Q96JJ6"/>
<dbReference type="BioGRID" id="124103">
    <property type="interactions" value="79"/>
</dbReference>
<dbReference type="FunCoup" id="Q96JJ6">
    <property type="interactions" value="120"/>
</dbReference>
<dbReference type="IntAct" id="Q96JJ6">
    <property type="interactions" value="63"/>
</dbReference>
<dbReference type="STRING" id="9606.ENSP00000380307"/>
<dbReference type="GlyGen" id="Q96JJ6">
    <property type="glycosylation" value="2 sites, 1 O-linked glycan (1 site)"/>
</dbReference>
<dbReference type="iPTMnet" id="Q96JJ6"/>
<dbReference type="PhosphoSitePlus" id="Q96JJ6"/>
<dbReference type="BioMuta" id="JPH4"/>
<dbReference type="DMDM" id="34582362"/>
<dbReference type="MassIVE" id="Q96JJ6"/>
<dbReference type="PaxDb" id="9606-ENSP00000380307"/>
<dbReference type="PeptideAtlas" id="Q96JJ6"/>
<dbReference type="ProteomicsDB" id="76971"/>
<dbReference type="Antibodypedia" id="22533">
    <property type="antibodies" value="111 antibodies from 23 providers"/>
</dbReference>
<dbReference type="DNASU" id="84502"/>
<dbReference type="Ensembl" id="ENST00000356300.9">
    <property type="protein sequence ID" value="ENSP00000348648.4"/>
    <property type="gene ID" value="ENSG00000092051.18"/>
</dbReference>
<dbReference type="Ensembl" id="ENST00000397118.7">
    <property type="protein sequence ID" value="ENSP00000380307.3"/>
    <property type="gene ID" value="ENSG00000092051.18"/>
</dbReference>
<dbReference type="GeneID" id="84502"/>
<dbReference type="KEGG" id="hsa:84502"/>
<dbReference type="MANE-Select" id="ENST00000356300.9">
    <property type="protein sequence ID" value="ENSP00000348648.4"/>
    <property type="RefSeq nucleotide sequence ID" value="NM_001146028.2"/>
    <property type="RefSeq protein sequence ID" value="NP_001139500.1"/>
</dbReference>
<dbReference type="UCSC" id="uc001wkq.3">
    <property type="organism name" value="human"/>
</dbReference>
<dbReference type="AGR" id="HGNC:20156"/>
<dbReference type="CTD" id="84502"/>
<dbReference type="DisGeNET" id="84502"/>
<dbReference type="GeneCards" id="JPH4"/>
<dbReference type="HGNC" id="HGNC:20156">
    <property type="gene designation" value="JPH4"/>
</dbReference>
<dbReference type="HPA" id="ENSG00000092051">
    <property type="expression patterns" value="Tissue enhanced (brain, seminal vesicle)"/>
</dbReference>
<dbReference type="MIM" id="619863">
    <property type="type" value="gene"/>
</dbReference>
<dbReference type="neXtProt" id="NX_Q96JJ6"/>
<dbReference type="OpenTargets" id="ENSG00000092051"/>
<dbReference type="PharmGKB" id="PA134897649"/>
<dbReference type="VEuPathDB" id="HostDB:ENSG00000092051"/>
<dbReference type="eggNOG" id="KOG0231">
    <property type="taxonomic scope" value="Eukaryota"/>
</dbReference>
<dbReference type="GeneTree" id="ENSGT00940000162272"/>
<dbReference type="HOGENOM" id="CLU_008078_4_0_1"/>
<dbReference type="InParanoid" id="Q96JJ6"/>
<dbReference type="OMA" id="PEAGCLM"/>
<dbReference type="OrthoDB" id="284854at2759"/>
<dbReference type="PAN-GO" id="Q96JJ6">
    <property type="GO annotations" value="4 GO annotations based on evolutionary models"/>
</dbReference>
<dbReference type="PhylomeDB" id="Q96JJ6"/>
<dbReference type="TreeFam" id="TF317210"/>
<dbReference type="PathwayCommons" id="Q96JJ6"/>
<dbReference type="SignaLink" id="Q96JJ6"/>
<dbReference type="BioGRID-ORCS" id="84502">
    <property type="hits" value="14 hits in 1147 CRISPR screens"/>
</dbReference>
<dbReference type="ChiTaRS" id="JPH4">
    <property type="organism name" value="human"/>
</dbReference>
<dbReference type="GenomeRNAi" id="84502"/>
<dbReference type="Pharos" id="Q96JJ6">
    <property type="development level" value="Tbio"/>
</dbReference>
<dbReference type="PRO" id="PR:Q96JJ6"/>
<dbReference type="Proteomes" id="UP000005640">
    <property type="component" value="Chromosome 14"/>
</dbReference>
<dbReference type="RNAct" id="Q96JJ6">
    <property type="molecule type" value="protein"/>
</dbReference>
<dbReference type="Bgee" id="ENSG00000092051">
    <property type="expression patterns" value="Expressed in superior frontal gyrus and 95 other cell types or tissues"/>
</dbReference>
<dbReference type="ExpressionAtlas" id="Q96JJ6">
    <property type="expression patterns" value="baseline and differential"/>
</dbReference>
<dbReference type="GO" id="GO:0043198">
    <property type="term" value="C:dendritic shaft"/>
    <property type="evidence" value="ECO:0007669"/>
    <property type="project" value="Ensembl"/>
</dbReference>
<dbReference type="GO" id="GO:0005789">
    <property type="term" value="C:endoplasmic reticulum membrane"/>
    <property type="evidence" value="ECO:0000318"/>
    <property type="project" value="GO_Central"/>
</dbReference>
<dbReference type="GO" id="GO:0030314">
    <property type="term" value="C:junctional membrane complex"/>
    <property type="evidence" value="ECO:0000318"/>
    <property type="project" value="GO_Central"/>
</dbReference>
<dbReference type="GO" id="GO:0014701">
    <property type="term" value="C:junctional sarcoplasmic reticulum membrane"/>
    <property type="evidence" value="ECO:0000304"/>
    <property type="project" value="BHF-UCL"/>
</dbReference>
<dbReference type="GO" id="GO:0005886">
    <property type="term" value="C:plasma membrane"/>
    <property type="evidence" value="ECO:0000318"/>
    <property type="project" value="GO_Central"/>
</dbReference>
<dbReference type="GO" id="GO:0005790">
    <property type="term" value="C:smooth endoplasmic reticulum"/>
    <property type="evidence" value="ECO:0007669"/>
    <property type="project" value="Ensembl"/>
</dbReference>
<dbReference type="GO" id="GO:0060402">
    <property type="term" value="P:calcium ion transport into cytosol"/>
    <property type="evidence" value="ECO:0000304"/>
    <property type="project" value="BHF-UCL"/>
</dbReference>
<dbReference type="GO" id="GO:0007612">
    <property type="term" value="P:learning"/>
    <property type="evidence" value="ECO:0007669"/>
    <property type="project" value="Ensembl"/>
</dbReference>
<dbReference type="GO" id="GO:0050885">
    <property type="term" value="P:neuromuscular process controlling balance"/>
    <property type="evidence" value="ECO:0007669"/>
    <property type="project" value="Ensembl"/>
</dbReference>
<dbReference type="GO" id="GO:0010882">
    <property type="term" value="P:regulation of cardiac muscle contraction by calcium ion signaling"/>
    <property type="evidence" value="ECO:0000304"/>
    <property type="project" value="BHF-UCL"/>
</dbReference>
<dbReference type="GO" id="GO:0001817">
    <property type="term" value="P:regulation of cytokine production"/>
    <property type="evidence" value="ECO:0007669"/>
    <property type="project" value="Ensembl"/>
</dbReference>
<dbReference type="GO" id="GO:0010880">
    <property type="term" value="P:regulation of release of sequestered calcium ion into cytosol by sarcoplasmic reticulum"/>
    <property type="evidence" value="ECO:0000304"/>
    <property type="project" value="BHF-UCL"/>
</dbReference>
<dbReference type="GO" id="GO:2001256">
    <property type="term" value="P:regulation of store-operated calcium entry"/>
    <property type="evidence" value="ECO:0007669"/>
    <property type="project" value="Ensembl"/>
</dbReference>
<dbReference type="GO" id="GO:0048167">
    <property type="term" value="P:regulation of synaptic plasticity"/>
    <property type="evidence" value="ECO:0000318"/>
    <property type="project" value="GO_Central"/>
</dbReference>
<dbReference type="FunFam" id="2.20.110.10:FF:000003">
    <property type="entry name" value="Junctophilin"/>
    <property type="match status" value="1"/>
</dbReference>
<dbReference type="FunFam" id="2.20.110.10:FF:000008">
    <property type="entry name" value="Junctophilin"/>
    <property type="match status" value="1"/>
</dbReference>
<dbReference type="Gene3D" id="2.20.110.10">
    <property type="entry name" value="Histone H3 K4-specific methyltransferase SET7/9 N-terminal domain"/>
    <property type="match status" value="2"/>
</dbReference>
<dbReference type="InterPro" id="IPR017191">
    <property type="entry name" value="Junctophilin"/>
</dbReference>
<dbReference type="InterPro" id="IPR003409">
    <property type="entry name" value="MORN"/>
</dbReference>
<dbReference type="PANTHER" id="PTHR23085">
    <property type="entry name" value="GH28348P"/>
    <property type="match status" value="1"/>
</dbReference>
<dbReference type="PANTHER" id="PTHR23085:SF14">
    <property type="entry name" value="JUNCTOPHILIN-4"/>
    <property type="match status" value="1"/>
</dbReference>
<dbReference type="Pfam" id="PF02493">
    <property type="entry name" value="MORN"/>
    <property type="match status" value="8"/>
</dbReference>
<dbReference type="PIRSF" id="PIRSF037387">
    <property type="entry name" value="Junctophilin"/>
    <property type="match status" value="1"/>
</dbReference>
<dbReference type="SMART" id="SM00698">
    <property type="entry name" value="MORN"/>
    <property type="match status" value="6"/>
</dbReference>
<dbReference type="SUPFAM" id="SSF82185">
    <property type="entry name" value="Histone H3 K4-specific methyltransferase SET7/9 N-terminal domain"/>
    <property type="match status" value="3"/>
</dbReference>
<feature type="chain" id="PRO_0000159852" description="Junctophilin-4">
    <location>
        <begin position="1"/>
        <end position="628"/>
    </location>
</feature>
<feature type="topological domain" description="Cytoplasmic" evidence="2">
    <location>
        <begin position="1"/>
        <end position="606"/>
    </location>
</feature>
<feature type="transmembrane region" description="Helical; Anchor for type IV membrane protein" evidence="2">
    <location>
        <begin position="607"/>
        <end position="628"/>
    </location>
</feature>
<feature type="repeat" description="MORN 1">
    <location>
        <begin position="50"/>
        <end position="72"/>
    </location>
</feature>
<feature type="repeat" description="MORN 2">
    <location>
        <begin position="74"/>
        <end position="95"/>
    </location>
</feature>
<feature type="repeat" description="MORN 3">
    <location>
        <begin position="96"/>
        <end position="117"/>
    </location>
</feature>
<feature type="repeat" description="MORN 4">
    <location>
        <begin position="118"/>
        <end position="140"/>
    </location>
</feature>
<feature type="repeat" description="MORN 5">
    <location>
        <begin position="141"/>
        <end position="163"/>
    </location>
</feature>
<feature type="repeat" description="MORN 6">
    <location>
        <begin position="164"/>
        <end position="186"/>
    </location>
</feature>
<feature type="repeat" description="MORN 7">
    <location>
        <begin position="317"/>
        <end position="339"/>
    </location>
</feature>
<feature type="repeat" description="MORN 8">
    <location>
        <begin position="340"/>
        <end position="362"/>
    </location>
</feature>
<feature type="region of interest" description="Disordered" evidence="3">
    <location>
        <begin position="158"/>
        <end position="214"/>
    </location>
</feature>
<feature type="region of interest" description="Disordered" evidence="3">
    <location>
        <begin position="231"/>
        <end position="276"/>
    </location>
</feature>
<feature type="region of interest" description="Disordered" evidence="3">
    <location>
        <begin position="415"/>
        <end position="602"/>
    </location>
</feature>
<feature type="compositionally biased region" description="Pro residues" evidence="3">
    <location>
        <begin position="170"/>
        <end position="179"/>
    </location>
</feature>
<feature type="compositionally biased region" description="Low complexity" evidence="3">
    <location>
        <begin position="231"/>
        <end position="241"/>
    </location>
</feature>
<feature type="compositionally biased region" description="Low complexity" evidence="3">
    <location>
        <begin position="253"/>
        <end position="272"/>
    </location>
</feature>
<feature type="compositionally biased region" description="Acidic residues" evidence="3">
    <location>
        <begin position="432"/>
        <end position="443"/>
    </location>
</feature>
<feature type="compositionally biased region" description="Low complexity" evidence="3">
    <location>
        <begin position="453"/>
        <end position="467"/>
    </location>
</feature>
<feature type="compositionally biased region" description="Low complexity" evidence="3">
    <location>
        <begin position="528"/>
        <end position="541"/>
    </location>
</feature>
<feature type="sequence conflict" description="In Ref. 3; AAH55429." evidence="4" ref="3">
    <original>R</original>
    <variation>Q</variation>
    <location>
        <position position="313"/>
    </location>
</feature>
<feature type="sequence conflict" description="In Ref. 3; AAH55429." evidence="4" ref="3">
    <original>P</original>
    <variation>H</variation>
    <location>
        <position position="580"/>
    </location>
</feature>
<sequence>MSPGGKFDFDDGGCYVGGWEAGRAHGYGVCTGPGAQGEYSGCWAHGFESLGVFTGPGGHSYQGHWQQGKREGLGVERKSRWTYRGEWLGGLKGRSGVWESVSGLRYAGLWKDGFQDGYGTETYSDGGTYQGQWQAGKRHGYGVRQSVPYHQAALLRSPRRTSLDSGHSDPPTPPPPLPLPGDEGGSPASGSRGGFVLAGPGDADGASSRKRTPAAGGFFRRSLLLSGLRAGGRRSSLGSKRGSLRSEVSSEVGSTGPPGSEASGPPAAAPPALIEGSATEVYAGEWRADRRSGFGVSQRSNGLRYEGEWLGNRRHGYGRTTRPDGSREEGKYKRNRLVHGGRVRSLLPLALRRGKVKEKVDRAVEGARRAVSAARQRQEIAAARAADALLKAVAASSVAEKAVEAARMAKLIAQDLQPMLEAPGRRPRQDSEGSDTEPLDEDSPGVYENGLTPSEGSPELPSSPASSRQPWRPPACRSPLPPGGDQGPFSSPKAWPEEWGGAGAQAEELAGYEAEDEAGMQGPGPRDGSPLLGGCSDSSGSLREEEGEDEEPLPPLRAPAGTEPEPIAMLVLRGSSSRGPDAGCLTEELGEPAATERPAQPGAANPLVVGAVALLDLSLAFLFSQLLT</sequence>
<evidence type="ECO:0000250" key="1"/>
<evidence type="ECO:0000255" key="2"/>
<evidence type="ECO:0000256" key="3">
    <source>
        <dbReference type="SAM" id="MobiDB-lite"/>
    </source>
</evidence>
<evidence type="ECO:0000305" key="4"/>
<name>JPH4_HUMAN</name>
<protein>
    <recommendedName>
        <fullName>Junctophilin-4</fullName>
        <shortName>JP-4</shortName>
    </recommendedName>
    <alternativeName>
        <fullName>Junctophilin-like 1 protein</fullName>
    </alternativeName>
</protein>